<sequence length="326" mass="37777">MSHQLTFADSEFSTKRRQTRKEIFLSRMEQILPWQNMTAVIEPFYPKAGNGRRPYPLETMLRIHCMQHWYNLSDGAMEDALYEIASMRLFARLSLDSALPDRTTIMNFRHLLEQHQLARQLFKTINRWLAEAGVMMTQGTLVDATIIEAPSSTKNKEQQRDPEMHQTKKGNQWHFGMKAHIGVDAKSGLTHSLVTTAANEHDLNQLGNLLHGEEQFVSADAGYQGAPQREELAEVDVDWLIAERPGKVKTLKQNPRKNKTAINIEYMKASIRARVEHPFRIIKRQFGFVKARYKGLLKNDNQLAMLFTLANLFRVDQMIRQWERSQ</sequence>
<accession>P76071</accession>
<accession>P77749</accession>
<organism>
    <name type="scientific">Escherichia coli (strain K12)</name>
    <dbReference type="NCBI Taxonomy" id="83333"/>
    <lineage>
        <taxon>Bacteria</taxon>
        <taxon>Pseudomonadati</taxon>
        <taxon>Pseudomonadota</taxon>
        <taxon>Gammaproteobacteria</taxon>
        <taxon>Enterobacterales</taxon>
        <taxon>Enterobacteriaceae</taxon>
        <taxon>Escherichia</taxon>
    </lineage>
</organism>
<reference key="1">
    <citation type="journal article" date="1997" name="Science">
        <title>The complete genome sequence of Escherichia coli K-12.</title>
        <authorList>
            <person name="Blattner F.R."/>
            <person name="Plunkett G. III"/>
            <person name="Bloch C.A."/>
            <person name="Perna N.T."/>
            <person name="Burland V."/>
            <person name="Riley M."/>
            <person name="Collado-Vides J."/>
            <person name="Glasner J.D."/>
            <person name="Rode C.K."/>
            <person name="Mayhew G.F."/>
            <person name="Gregor J."/>
            <person name="Davis N.W."/>
            <person name="Kirkpatrick H.A."/>
            <person name="Goeden M.A."/>
            <person name="Rose D.J."/>
            <person name="Mau B."/>
            <person name="Shao Y."/>
        </authorList>
    </citation>
    <scope>NUCLEOTIDE SEQUENCE [LARGE SCALE GENOMIC DNA]</scope>
    <source>
        <strain>K12 / MG1655 / ATCC 47076</strain>
    </source>
</reference>
<reference key="2">
    <citation type="journal article" date="2006" name="Mol. Syst. Biol.">
        <title>Highly accurate genome sequences of Escherichia coli K-12 strains MG1655 and W3110.</title>
        <authorList>
            <person name="Hayashi K."/>
            <person name="Morooka N."/>
            <person name="Yamamoto Y."/>
            <person name="Fujita K."/>
            <person name="Isono K."/>
            <person name="Choi S."/>
            <person name="Ohtsubo E."/>
            <person name="Baba T."/>
            <person name="Wanner B.L."/>
            <person name="Mori H."/>
            <person name="Horiuchi T."/>
        </authorList>
    </citation>
    <scope>NUCLEOTIDE SEQUENCE [LARGE SCALE GENOMIC DNA]</scope>
    <source>
        <strain>K12 / W3110 / ATCC 27325 / DSM 5911</strain>
    </source>
</reference>
<name>INSH5_ECOLI</name>
<keyword id="KW-0233">DNA recombination</keyword>
<keyword id="KW-0238">DNA-binding</keyword>
<keyword id="KW-1185">Reference proteome</keyword>
<keyword id="KW-0814">Transposable element</keyword>
<keyword id="KW-0815">Transposition</keyword>
<comment type="function">
    <text>Involved in the transposition of the insertion sequence IS5.</text>
</comment>
<comment type="similarity">
    <text evidence="1">Belongs to the transposase 11 family.</text>
</comment>
<proteinExistence type="inferred from homology"/>
<gene>
    <name type="primary">insH5</name>
    <name type="ordered locus">b1370</name>
    <name type="ordered locus">JW1363</name>
</gene>
<feature type="chain" id="PRO_0000173293" description="Transposase InsH for insertion sequence element IS5Y">
    <location>
        <begin position="1"/>
        <end position="326"/>
    </location>
</feature>
<dbReference type="EMBL" id="U00096">
    <property type="protein sequence ID" value="AAC74452.1"/>
    <property type="molecule type" value="Genomic_DNA"/>
</dbReference>
<dbReference type="EMBL" id="AP009048">
    <property type="protein sequence ID" value="BAA14963.2"/>
    <property type="molecule type" value="Genomic_DNA"/>
</dbReference>
<dbReference type="PIR" id="E64887">
    <property type="entry name" value="E64887"/>
</dbReference>
<dbReference type="PIR" id="T09186">
    <property type="entry name" value="T09186"/>
</dbReference>
<dbReference type="RefSeq" id="NP_415888.1">
    <property type="nucleotide sequence ID" value="NC_000913.3"/>
</dbReference>
<dbReference type="RefSeq" id="WP_000019448.1">
    <property type="nucleotide sequence ID" value="NZ_CP064683.1"/>
</dbReference>
<dbReference type="FunCoup" id="P76071">
    <property type="interactions" value="12"/>
</dbReference>
<dbReference type="STRING" id="511145.b1370"/>
<dbReference type="jPOST" id="P76071"/>
<dbReference type="PaxDb" id="511145-b1370"/>
<dbReference type="GeneID" id="945944"/>
<dbReference type="KEGG" id="ecj:JW1363"/>
<dbReference type="KEGG" id="eco:b1370"/>
<dbReference type="PATRIC" id="fig|83333.103.peg.2184"/>
<dbReference type="EchoBASE" id="EB4723"/>
<dbReference type="eggNOG" id="COG3039">
    <property type="taxonomic scope" value="Bacteria"/>
</dbReference>
<dbReference type="HOGENOM" id="CLU_049873_1_1_6"/>
<dbReference type="InParanoid" id="P76071"/>
<dbReference type="OMA" id="VEHIFGF"/>
<dbReference type="OrthoDB" id="9774608at2"/>
<dbReference type="PhylomeDB" id="P76071"/>
<dbReference type="BioCyc" id="EcoCyc:G6693-MONOMER"/>
<dbReference type="PRO" id="PR:P76071"/>
<dbReference type="Proteomes" id="UP000000625">
    <property type="component" value="Chromosome"/>
</dbReference>
<dbReference type="GO" id="GO:0005829">
    <property type="term" value="C:cytosol"/>
    <property type="evidence" value="ECO:0000314"/>
    <property type="project" value="EcoCyc"/>
</dbReference>
<dbReference type="GO" id="GO:0003677">
    <property type="term" value="F:DNA binding"/>
    <property type="evidence" value="ECO:0007669"/>
    <property type="project" value="UniProtKB-KW"/>
</dbReference>
<dbReference type="GO" id="GO:0004803">
    <property type="term" value="F:transposase activity"/>
    <property type="evidence" value="ECO:0000318"/>
    <property type="project" value="GO_Central"/>
</dbReference>
<dbReference type="GO" id="GO:0006313">
    <property type="term" value="P:DNA transposition"/>
    <property type="evidence" value="ECO:0000318"/>
    <property type="project" value="GO_Central"/>
</dbReference>
<dbReference type="GO" id="GO:0045893">
    <property type="term" value="P:positive regulation of DNA-templated transcription"/>
    <property type="evidence" value="ECO:0000315"/>
    <property type="project" value="EcoCyc"/>
</dbReference>
<dbReference type="InterPro" id="IPR047959">
    <property type="entry name" value="Transpos_IS5"/>
</dbReference>
<dbReference type="InterPro" id="IPR002559">
    <property type="entry name" value="Transposase_11"/>
</dbReference>
<dbReference type="InterPro" id="IPR008490">
    <property type="entry name" value="Transposase_InsH_N"/>
</dbReference>
<dbReference type="NCBIfam" id="NF033581">
    <property type="entry name" value="transpos_IS5_4"/>
    <property type="match status" value="1"/>
</dbReference>
<dbReference type="PANTHER" id="PTHR35604">
    <property type="entry name" value="TRANSPOSASE INSH FOR INSERTION SEQUENCE ELEMENT IS5A-RELATED"/>
    <property type="match status" value="1"/>
</dbReference>
<dbReference type="PANTHER" id="PTHR35604:SF2">
    <property type="entry name" value="TRANSPOSASE INSH FOR INSERTION SEQUENCE ELEMENT IS5A-RELATED"/>
    <property type="match status" value="1"/>
</dbReference>
<dbReference type="Pfam" id="PF01609">
    <property type="entry name" value="DDE_Tnp_1"/>
    <property type="match status" value="1"/>
</dbReference>
<dbReference type="Pfam" id="PF05598">
    <property type="entry name" value="DUF772"/>
    <property type="match status" value="1"/>
</dbReference>
<evidence type="ECO:0000305" key="1"/>
<protein>
    <recommendedName>
        <fullName>Transposase InsH for insertion sequence element IS5Y</fullName>
    </recommendedName>
</protein>